<sequence>MTLTTSDKAAVLADALPWLTALNDKIVVVKYGGNAMTDDRLKAAFAADMVFLRNCGIHPVVVHGGGPQISAMLKKLGIAGDFKGGFRVTTPEVLDVARMVLFGQVGRELVNLINAYGPYAVGITGEDAHLFTAVRRTVMVDGVATDIGLVGDVERVNTDAVLDLIDAGRIPVVSTIAPDTDGLVYNINADTAAAALAEALSAEKLLMLTDVEGLYTRWPDRDSLVSQIDSDALAELLPTLEAGMVPKIEACLRAIDGGVPSAHVIDGRVEHCVLVELFTDEGAGTKVVQST</sequence>
<reference key="1">
    <citation type="submission" date="2006-12" db="EMBL/GenBank/DDBJ databases">
        <title>Complete sequence of Mycobacterium vanbaalenii PYR-1.</title>
        <authorList>
            <consortium name="US DOE Joint Genome Institute"/>
            <person name="Copeland A."/>
            <person name="Lucas S."/>
            <person name="Lapidus A."/>
            <person name="Barry K."/>
            <person name="Detter J.C."/>
            <person name="Glavina del Rio T."/>
            <person name="Hammon N."/>
            <person name="Israni S."/>
            <person name="Dalin E."/>
            <person name="Tice H."/>
            <person name="Pitluck S."/>
            <person name="Singan V."/>
            <person name="Schmutz J."/>
            <person name="Larimer F."/>
            <person name="Land M."/>
            <person name="Hauser L."/>
            <person name="Kyrpides N."/>
            <person name="Anderson I.J."/>
            <person name="Miller C."/>
            <person name="Richardson P."/>
        </authorList>
    </citation>
    <scope>NUCLEOTIDE SEQUENCE [LARGE SCALE GENOMIC DNA]</scope>
    <source>
        <strain>DSM 7251 / JCM 13017 / BCRC 16820 / KCTC 9966 / NRRL B-24157 / PYR-1</strain>
    </source>
</reference>
<gene>
    <name evidence="1" type="primary">argB</name>
    <name type="ordered locus">Mvan_3312</name>
</gene>
<keyword id="KW-0028">Amino-acid biosynthesis</keyword>
<keyword id="KW-0055">Arginine biosynthesis</keyword>
<keyword id="KW-0067">ATP-binding</keyword>
<keyword id="KW-0963">Cytoplasm</keyword>
<keyword id="KW-0418">Kinase</keyword>
<keyword id="KW-0547">Nucleotide-binding</keyword>
<keyword id="KW-0808">Transferase</keyword>
<organism>
    <name type="scientific">Mycolicibacterium vanbaalenii (strain DSM 7251 / JCM 13017 / BCRC 16820 / KCTC 9966 / NRRL B-24157 / PYR-1)</name>
    <name type="common">Mycobacterium vanbaalenii</name>
    <dbReference type="NCBI Taxonomy" id="350058"/>
    <lineage>
        <taxon>Bacteria</taxon>
        <taxon>Bacillati</taxon>
        <taxon>Actinomycetota</taxon>
        <taxon>Actinomycetes</taxon>
        <taxon>Mycobacteriales</taxon>
        <taxon>Mycobacteriaceae</taxon>
        <taxon>Mycolicibacterium</taxon>
    </lineage>
</organism>
<comment type="function">
    <text evidence="1">Catalyzes the ATP-dependent phosphorylation of N-acetyl-L-glutamate.</text>
</comment>
<comment type="catalytic activity">
    <reaction evidence="1">
        <text>N-acetyl-L-glutamate + ATP = N-acetyl-L-glutamyl 5-phosphate + ADP</text>
        <dbReference type="Rhea" id="RHEA:14629"/>
        <dbReference type="ChEBI" id="CHEBI:30616"/>
        <dbReference type="ChEBI" id="CHEBI:44337"/>
        <dbReference type="ChEBI" id="CHEBI:57936"/>
        <dbReference type="ChEBI" id="CHEBI:456216"/>
        <dbReference type="EC" id="2.7.2.8"/>
    </reaction>
</comment>
<comment type="pathway">
    <text evidence="1">Amino-acid biosynthesis; L-arginine biosynthesis; N(2)-acetyl-L-ornithine from L-glutamate: step 2/4.</text>
</comment>
<comment type="subcellular location">
    <subcellularLocation>
        <location evidence="1">Cytoplasm</location>
    </subcellularLocation>
</comment>
<comment type="similarity">
    <text evidence="1">Belongs to the acetylglutamate kinase family. ArgB subfamily.</text>
</comment>
<evidence type="ECO:0000255" key="1">
    <source>
        <dbReference type="HAMAP-Rule" id="MF_00082"/>
    </source>
</evidence>
<name>ARGB_MYCVP</name>
<dbReference type="EC" id="2.7.2.8" evidence="1"/>
<dbReference type="EMBL" id="CP000511">
    <property type="protein sequence ID" value="ABM14110.1"/>
    <property type="molecule type" value="Genomic_DNA"/>
</dbReference>
<dbReference type="RefSeq" id="WP_011780515.1">
    <property type="nucleotide sequence ID" value="NC_008726.1"/>
</dbReference>
<dbReference type="SMR" id="A1TAB0"/>
<dbReference type="STRING" id="350058.Mvan_3312"/>
<dbReference type="KEGG" id="mva:Mvan_3312"/>
<dbReference type="eggNOG" id="COG0548">
    <property type="taxonomic scope" value="Bacteria"/>
</dbReference>
<dbReference type="HOGENOM" id="CLU_053680_0_0_11"/>
<dbReference type="UniPathway" id="UPA00068">
    <property type="reaction ID" value="UER00107"/>
</dbReference>
<dbReference type="Proteomes" id="UP000009159">
    <property type="component" value="Chromosome"/>
</dbReference>
<dbReference type="GO" id="GO:0005737">
    <property type="term" value="C:cytoplasm"/>
    <property type="evidence" value="ECO:0007669"/>
    <property type="project" value="UniProtKB-SubCell"/>
</dbReference>
<dbReference type="GO" id="GO:0003991">
    <property type="term" value="F:acetylglutamate kinase activity"/>
    <property type="evidence" value="ECO:0007669"/>
    <property type="project" value="UniProtKB-UniRule"/>
</dbReference>
<dbReference type="GO" id="GO:0005524">
    <property type="term" value="F:ATP binding"/>
    <property type="evidence" value="ECO:0007669"/>
    <property type="project" value="UniProtKB-UniRule"/>
</dbReference>
<dbReference type="GO" id="GO:0042450">
    <property type="term" value="P:arginine biosynthetic process via ornithine"/>
    <property type="evidence" value="ECO:0007669"/>
    <property type="project" value="UniProtKB-UniRule"/>
</dbReference>
<dbReference type="GO" id="GO:0006526">
    <property type="term" value="P:L-arginine biosynthetic process"/>
    <property type="evidence" value="ECO:0007669"/>
    <property type="project" value="UniProtKB-UniPathway"/>
</dbReference>
<dbReference type="CDD" id="cd04250">
    <property type="entry name" value="AAK_NAGK-C"/>
    <property type="match status" value="1"/>
</dbReference>
<dbReference type="FunFam" id="3.40.1160.10:FF:000004">
    <property type="entry name" value="Acetylglutamate kinase"/>
    <property type="match status" value="1"/>
</dbReference>
<dbReference type="Gene3D" id="3.40.1160.10">
    <property type="entry name" value="Acetylglutamate kinase-like"/>
    <property type="match status" value="1"/>
</dbReference>
<dbReference type="HAMAP" id="MF_00082">
    <property type="entry name" value="ArgB"/>
    <property type="match status" value="1"/>
</dbReference>
<dbReference type="InterPro" id="IPR036393">
    <property type="entry name" value="AceGlu_kinase-like_sf"/>
</dbReference>
<dbReference type="InterPro" id="IPR004662">
    <property type="entry name" value="AcgluKinase_fam"/>
</dbReference>
<dbReference type="InterPro" id="IPR037528">
    <property type="entry name" value="ArgB"/>
</dbReference>
<dbReference type="InterPro" id="IPR001048">
    <property type="entry name" value="Asp/Glu/Uridylate_kinase"/>
</dbReference>
<dbReference type="InterPro" id="IPR001057">
    <property type="entry name" value="Glu/AcGlu_kinase"/>
</dbReference>
<dbReference type="InterPro" id="IPR041727">
    <property type="entry name" value="NAGK-C"/>
</dbReference>
<dbReference type="NCBIfam" id="TIGR00761">
    <property type="entry name" value="argB"/>
    <property type="match status" value="1"/>
</dbReference>
<dbReference type="PANTHER" id="PTHR23342">
    <property type="entry name" value="N-ACETYLGLUTAMATE SYNTHASE"/>
    <property type="match status" value="1"/>
</dbReference>
<dbReference type="PANTHER" id="PTHR23342:SF0">
    <property type="entry name" value="N-ACETYLGLUTAMATE SYNTHASE, MITOCHONDRIAL"/>
    <property type="match status" value="1"/>
</dbReference>
<dbReference type="Pfam" id="PF00696">
    <property type="entry name" value="AA_kinase"/>
    <property type="match status" value="1"/>
</dbReference>
<dbReference type="PIRSF" id="PIRSF000728">
    <property type="entry name" value="NAGK"/>
    <property type="match status" value="1"/>
</dbReference>
<dbReference type="PRINTS" id="PR00474">
    <property type="entry name" value="GLU5KINASE"/>
</dbReference>
<dbReference type="SUPFAM" id="SSF53633">
    <property type="entry name" value="Carbamate kinase-like"/>
    <property type="match status" value="1"/>
</dbReference>
<protein>
    <recommendedName>
        <fullName evidence="1">Acetylglutamate kinase</fullName>
        <ecNumber evidence="1">2.7.2.8</ecNumber>
    </recommendedName>
    <alternativeName>
        <fullName evidence="1">N-acetyl-L-glutamate 5-phosphotransferase</fullName>
    </alternativeName>
    <alternativeName>
        <fullName evidence="1">NAG kinase</fullName>
        <shortName evidence="1">NAGK</shortName>
    </alternativeName>
</protein>
<proteinExistence type="inferred from homology"/>
<feature type="chain" id="PRO_1000010516" description="Acetylglutamate kinase">
    <location>
        <begin position="1"/>
        <end position="291"/>
    </location>
</feature>
<feature type="binding site" evidence="1">
    <location>
        <begin position="65"/>
        <end position="66"/>
    </location>
    <ligand>
        <name>substrate</name>
    </ligand>
</feature>
<feature type="binding site" evidence="1">
    <location>
        <position position="87"/>
    </location>
    <ligand>
        <name>substrate</name>
    </ligand>
</feature>
<feature type="binding site" evidence="1">
    <location>
        <position position="186"/>
    </location>
    <ligand>
        <name>substrate</name>
    </ligand>
</feature>
<feature type="site" description="Transition state stabilizer" evidence="1">
    <location>
        <position position="30"/>
    </location>
</feature>
<feature type="site" description="Transition state stabilizer" evidence="1">
    <location>
        <position position="247"/>
    </location>
</feature>
<accession>A1TAB0</accession>